<comment type="subcellular location">
    <subcellularLocation>
        <location evidence="1">Secreted</location>
    </subcellularLocation>
</comment>
<comment type="similarity">
    <text evidence="3">Belongs to the DEFL family.</text>
</comment>
<name>DF270_ARATH</name>
<feature type="signal peptide" evidence="2">
    <location>
        <begin position="1"/>
        <end position="23"/>
    </location>
</feature>
<feature type="chain" id="PRO_0000379732" description="Putative defensin-like protein 270">
    <location>
        <begin position="24"/>
        <end position="73"/>
    </location>
</feature>
<feature type="disulfide bond" evidence="1">
    <location>
        <begin position="33"/>
        <end position="72"/>
    </location>
</feature>
<feature type="disulfide bond" evidence="1">
    <location>
        <begin position="39"/>
        <end position="60"/>
    </location>
</feature>
<feature type="disulfide bond" evidence="1">
    <location>
        <begin position="45"/>
        <end position="70"/>
    </location>
</feature>
<feature type="disulfide bond" evidence="1">
    <location>
        <begin position="49"/>
        <end position="71"/>
    </location>
</feature>
<reference key="1">
    <citation type="journal article" date="1998" name="DNA Res.">
        <title>Structural analysis of Arabidopsis thaliana chromosome 5. IV. Sequence features of the regions of 1,456,315 bp covered by nineteen physically assigned P1 and TAC clones.</title>
        <authorList>
            <person name="Sato S."/>
            <person name="Kaneko T."/>
            <person name="Kotani H."/>
            <person name="Nakamura Y."/>
            <person name="Asamizu E."/>
            <person name="Miyajima N."/>
            <person name="Tabata S."/>
        </authorList>
    </citation>
    <scope>NUCLEOTIDE SEQUENCE [LARGE SCALE GENOMIC DNA]</scope>
    <source>
        <strain>cv. Columbia</strain>
    </source>
</reference>
<reference key="2">
    <citation type="journal article" date="2017" name="Plant J.">
        <title>Araport11: a complete reannotation of the Arabidopsis thaliana reference genome.</title>
        <authorList>
            <person name="Cheng C.Y."/>
            <person name="Krishnakumar V."/>
            <person name="Chan A.P."/>
            <person name="Thibaud-Nissen F."/>
            <person name="Schobel S."/>
            <person name="Town C.D."/>
        </authorList>
    </citation>
    <scope>GENOME REANNOTATION</scope>
    <source>
        <strain>cv. Columbia</strain>
    </source>
</reference>
<reference key="3">
    <citation type="journal article" date="2005" name="Plant Physiol.">
        <title>Genome organization of more than 300 defensin-like genes in Arabidopsis.</title>
        <authorList>
            <person name="Silverstein K.A.T."/>
            <person name="Graham M.A."/>
            <person name="Paape T.D."/>
            <person name="VandenBosch K.A."/>
        </authorList>
    </citation>
    <scope>GENE FAMILY</scope>
</reference>
<organism>
    <name type="scientific">Arabidopsis thaliana</name>
    <name type="common">Mouse-ear cress</name>
    <dbReference type="NCBI Taxonomy" id="3702"/>
    <lineage>
        <taxon>Eukaryota</taxon>
        <taxon>Viridiplantae</taxon>
        <taxon>Streptophyta</taxon>
        <taxon>Embryophyta</taxon>
        <taxon>Tracheophyta</taxon>
        <taxon>Spermatophyta</taxon>
        <taxon>Magnoliopsida</taxon>
        <taxon>eudicotyledons</taxon>
        <taxon>Gunneridae</taxon>
        <taxon>Pentapetalae</taxon>
        <taxon>rosids</taxon>
        <taxon>malvids</taxon>
        <taxon>Brassicales</taxon>
        <taxon>Brassicaceae</taxon>
        <taxon>Camelineae</taxon>
        <taxon>Arabidopsis</taxon>
    </lineage>
</organism>
<dbReference type="EMBL" id="AB010074">
    <property type="status" value="NOT_ANNOTATED_CDS"/>
    <property type="molecule type" value="Genomic_DNA"/>
</dbReference>
<dbReference type="EMBL" id="CP002688">
    <property type="protein sequence ID" value="AED96134.1"/>
    <property type="molecule type" value="Genomic_DNA"/>
</dbReference>
<dbReference type="RefSeq" id="NP_001032058.1">
    <property type="nucleotide sequence ID" value="NM_001036981.2"/>
</dbReference>
<dbReference type="STRING" id="3702.Q2V2Z3"/>
<dbReference type="PaxDb" id="3702-AT5G51845.1"/>
<dbReference type="EnsemblPlants" id="AT5G51845.1">
    <property type="protein sequence ID" value="AT5G51845.1"/>
    <property type="gene ID" value="AT5G51845"/>
</dbReference>
<dbReference type="GeneID" id="3771488"/>
<dbReference type="Gramene" id="AT5G51845.1">
    <property type="protein sequence ID" value="AT5G51845.1"/>
    <property type="gene ID" value="AT5G51845"/>
</dbReference>
<dbReference type="KEGG" id="ath:AT5G51845"/>
<dbReference type="Araport" id="AT5G51845"/>
<dbReference type="TAIR" id="AT5G51845"/>
<dbReference type="eggNOG" id="ENOG502SEVK">
    <property type="taxonomic scope" value="Eukaryota"/>
</dbReference>
<dbReference type="HOGENOM" id="CLU_195514_0_0_1"/>
<dbReference type="InParanoid" id="Q2V2Z3"/>
<dbReference type="OMA" id="CVFKGPC"/>
<dbReference type="OrthoDB" id="1077618at2759"/>
<dbReference type="PhylomeDB" id="Q2V2Z3"/>
<dbReference type="PRO" id="PR:Q2V2Z3"/>
<dbReference type="Proteomes" id="UP000006548">
    <property type="component" value="Chromosome 5"/>
</dbReference>
<dbReference type="ExpressionAtlas" id="Q2V2Z3">
    <property type="expression patterns" value="baseline and differential"/>
</dbReference>
<dbReference type="GO" id="GO:0005576">
    <property type="term" value="C:extracellular region"/>
    <property type="evidence" value="ECO:0007669"/>
    <property type="project" value="UniProtKB-SubCell"/>
</dbReference>
<dbReference type="GO" id="GO:0050832">
    <property type="term" value="P:defense response to fungus"/>
    <property type="evidence" value="ECO:0007669"/>
    <property type="project" value="UniProtKB-KW"/>
</dbReference>
<dbReference type="GO" id="GO:0031640">
    <property type="term" value="P:killing of cells of another organism"/>
    <property type="evidence" value="ECO:0007669"/>
    <property type="project" value="UniProtKB-KW"/>
</dbReference>
<dbReference type="InterPro" id="IPR010851">
    <property type="entry name" value="DEFL"/>
</dbReference>
<dbReference type="PANTHER" id="PTHR48224:SF1">
    <property type="entry name" value="DEFENSIN-LIKE PROTEIN 270"/>
    <property type="match status" value="1"/>
</dbReference>
<dbReference type="PANTHER" id="PTHR48224">
    <property type="entry name" value="DEFENSIN-LIKE PROTEIN 270-RELATED"/>
    <property type="match status" value="1"/>
</dbReference>
<dbReference type="Pfam" id="PF25052">
    <property type="entry name" value="AtDEF-like"/>
    <property type="match status" value="1"/>
</dbReference>
<protein>
    <recommendedName>
        <fullName>Putative defensin-like protein 270</fullName>
    </recommendedName>
</protein>
<accession>Q2V2Z3</accession>
<keyword id="KW-0929">Antimicrobial</keyword>
<keyword id="KW-1015">Disulfide bond</keyword>
<keyword id="KW-0295">Fungicide</keyword>
<keyword id="KW-0611">Plant defense</keyword>
<keyword id="KW-1185">Reference proteome</keyword>
<keyword id="KW-0964">Secreted</keyword>
<keyword id="KW-0732">Signal</keyword>
<sequence>MMSSKSHFVALLLIIFLIVNVQSTRIMDDSSDCVFKGPCQRRSDCYERCGLKPPSRAALCQPMGLQGRVCCCL</sequence>
<proteinExistence type="inferred from homology"/>
<evidence type="ECO:0000250" key="1"/>
<evidence type="ECO:0000255" key="2"/>
<evidence type="ECO:0000305" key="3"/>
<gene>
    <name type="ordered locus">At5g51845</name>
    <name type="ORF">MIO24</name>
</gene>